<evidence type="ECO:0000255" key="1">
    <source>
        <dbReference type="HAMAP-Rule" id="MF_00402"/>
    </source>
</evidence>
<evidence type="ECO:0000305" key="2"/>
<name>RL19_STRPJ</name>
<reference key="1">
    <citation type="journal article" date="2009" name="J. Bacteriol.">
        <title>Role of conjugative elements in the evolution of the multidrug-resistant pandemic clone Streptococcus pneumoniae Spain23F ST81.</title>
        <authorList>
            <person name="Croucher N.J."/>
            <person name="Walker D."/>
            <person name="Romero P."/>
            <person name="Lennard N."/>
            <person name="Paterson G.K."/>
            <person name="Bason N.C."/>
            <person name="Mitchell A.M."/>
            <person name="Quail M.A."/>
            <person name="Andrew P.W."/>
            <person name="Parkhill J."/>
            <person name="Bentley S.D."/>
            <person name="Mitchell T.J."/>
        </authorList>
    </citation>
    <scope>NUCLEOTIDE SEQUENCE [LARGE SCALE GENOMIC DNA]</scope>
    <source>
        <strain>ATCC 700669 / Spain 23F-1</strain>
    </source>
</reference>
<feature type="chain" id="PRO_1000193894" description="Large ribosomal subunit protein bL19">
    <location>
        <begin position="1"/>
        <end position="115"/>
    </location>
</feature>
<comment type="function">
    <text evidence="1">This protein is located at the 30S-50S ribosomal subunit interface and may play a role in the structure and function of the aminoacyl-tRNA binding site.</text>
</comment>
<comment type="similarity">
    <text evidence="1">Belongs to the bacterial ribosomal protein bL19 family.</text>
</comment>
<accession>B8ZJV6</accession>
<sequence>MNPLIQSLTEGQLRTDIPSFRPGDTVRVHAKVVEGNRERIQIFEGVVIARKGAGISENYTVRKISNGVGVERIFPIHTPRVEKIEVVRYGKVRRAKLYYLRALQGKAARIKEIRR</sequence>
<keyword id="KW-0687">Ribonucleoprotein</keyword>
<keyword id="KW-0689">Ribosomal protein</keyword>
<dbReference type="EMBL" id="FM211187">
    <property type="protein sequence ID" value="CAR68993.1"/>
    <property type="molecule type" value="Genomic_DNA"/>
</dbReference>
<dbReference type="RefSeq" id="WP_001068669.1">
    <property type="nucleotide sequence ID" value="NC_011900.1"/>
</dbReference>
<dbReference type="SMR" id="B8ZJV6"/>
<dbReference type="GeneID" id="93739485"/>
<dbReference type="KEGG" id="sne:SPN23F11870"/>
<dbReference type="HOGENOM" id="CLU_103507_2_1_9"/>
<dbReference type="GO" id="GO:0022625">
    <property type="term" value="C:cytosolic large ribosomal subunit"/>
    <property type="evidence" value="ECO:0007669"/>
    <property type="project" value="TreeGrafter"/>
</dbReference>
<dbReference type="GO" id="GO:0003735">
    <property type="term" value="F:structural constituent of ribosome"/>
    <property type="evidence" value="ECO:0007669"/>
    <property type="project" value="InterPro"/>
</dbReference>
<dbReference type="GO" id="GO:0006412">
    <property type="term" value="P:translation"/>
    <property type="evidence" value="ECO:0007669"/>
    <property type="project" value="UniProtKB-UniRule"/>
</dbReference>
<dbReference type="FunFam" id="2.30.30.790:FF:000001">
    <property type="entry name" value="50S ribosomal protein L19"/>
    <property type="match status" value="1"/>
</dbReference>
<dbReference type="Gene3D" id="2.30.30.790">
    <property type="match status" value="1"/>
</dbReference>
<dbReference type="HAMAP" id="MF_00402">
    <property type="entry name" value="Ribosomal_bL19"/>
    <property type="match status" value="1"/>
</dbReference>
<dbReference type="InterPro" id="IPR001857">
    <property type="entry name" value="Ribosomal_bL19"/>
</dbReference>
<dbReference type="InterPro" id="IPR018257">
    <property type="entry name" value="Ribosomal_bL19_CS"/>
</dbReference>
<dbReference type="InterPro" id="IPR038657">
    <property type="entry name" value="Ribosomal_bL19_sf"/>
</dbReference>
<dbReference type="InterPro" id="IPR008991">
    <property type="entry name" value="Translation_prot_SH3-like_sf"/>
</dbReference>
<dbReference type="NCBIfam" id="TIGR01024">
    <property type="entry name" value="rplS_bact"/>
    <property type="match status" value="1"/>
</dbReference>
<dbReference type="PANTHER" id="PTHR15680:SF9">
    <property type="entry name" value="LARGE RIBOSOMAL SUBUNIT PROTEIN BL19M"/>
    <property type="match status" value="1"/>
</dbReference>
<dbReference type="PANTHER" id="PTHR15680">
    <property type="entry name" value="RIBOSOMAL PROTEIN L19"/>
    <property type="match status" value="1"/>
</dbReference>
<dbReference type="Pfam" id="PF01245">
    <property type="entry name" value="Ribosomal_L19"/>
    <property type="match status" value="1"/>
</dbReference>
<dbReference type="PIRSF" id="PIRSF002191">
    <property type="entry name" value="Ribosomal_L19"/>
    <property type="match status" value="1"/>
</dbReference>
<dbReference type="PRINTS" id="PR00061">
    <property type="entry name" value="RIBOSOMALL19"/>
</dbReference>
<dbReference type="SUPFAM" id="SSF50104">
    <property type="entry name" value="Translation proteins SH3-like domain"/>
    <property type="match status" value="1"/>
</dbReference>
<dbReference type="PROSITE" id="PS01015">
    <property type="entry name" value="RIBOSOMAL_L19"/>
    <property type="match status" value="1"/>
</dbReference>
<proteinExistence type="inferred from homology"/>
<gene>
    <name evidence="1" type="primary">rplS</name>
    <name type="ordered locus">SPN23F11870</name>
</gene>
<protein>
    <recommendedName>
        <fullName evidence="1">Large ribosomal subunit protein bL19</fullName>
    </recommendedName>
    <alternativeName>
        <fullName evidence="2">50S ribosomal protein L19</fullName>
    </alternativeName>
</protein>
<organism>
    <name type="scientific">Streptococcus pneumoniae (strain ATCC 700669 / Spain 23F-1)</name>
    <dbReference type="NCBI Taxonomy" id="561276"/>
    <lineage>
        <taxon>Bacteria</taxon>
        <taxon>Bacillati</taxon>
        <taxon>Bacillota</taxon>
        <taxon>Bacilli</taxon>
        <taxon>Lactobacillales</taxon>
        <taxon>Streptococcaceae</taxon>
        <taxon>Streptococcus</taxon>
    </lineage>
</organism>